<proteinExistence type="evidence at transcript level"/>
<dbReference type="EC" id="2.3.2.13"/>
<dbReference type="EMBL" id="L10714">
    <property type="status" value="NOT_ANNOTATED_CDS"/>
    <property type="molecule type" value="mRNA"/>
</dbReference>
<dbReference type="EMBL" id="M30468">
    <property type="protein sequence ID" value="AAA31475.1"/>
    <property type="molecule type" value="mRNA"/>
</dbReference>
<dbReference type="PIR" id="A33477">
    <property type="entry name" value="A33477"/>
</dbReference>
<dbReference type="PIR" id="A54269">
    <property type="entry name" value="A54269"/>
</dbReference>
<dbReference type="SMR" id="P22758"/>
<dbReference type="FunCoup" id="P22758">
    <property type="interactions" value="11"/>
</dbReference>
<dbReference type="STRING" id="9986.ENSOCUP00000043691"/>
<dbReference type="InParanoid" id="P22758"/>
<dbReference type="Proteomes" id="UP000001811">
    <property type="component" value="Unplaced"/>
</dbReference>
<dbReference type="GO" id="GO:0016020">
    <property type="term" value="C:membrane"/>
    <property type="evidence" value="ECO:0000250"/>
    <property type="project" value="UniProtKB"/>
</dbReference>
<dbReference type="GO" id="GO:0046872">
    <property type="term" value="F:metal ion binding"/>
    <property type="evidence" value="ECO:0007669"/>
    <property type="project" value="UniProtKB-KW"/>
</dbReference>
<dbReference type="GO" id="GO:0003810">
    <property type="term" value="F:protein-glutamine gamma-glutamyltransferase activity"/>
    <property type="evidence" value="ECO:0007669"/>
    <property type="project" value="UniProtKB-EC"/>
</dbReference>
<dbReference type="GO" id="GO:0031424">
    <property type="term" value="P:keratinization"/>
    <property type="evidence" value="ECO:0007669"/>
    <property type="project" value="UniProtKB-KW"/>
</dbReference>
<dbReference type="GO" id="GO:0045787">
    <property type="term" value="P:positive regulation of cell cycle"/>
    <property type="evidence" value="ECO:0000250"/>
    <property type="project" value="UniProtKB"/>
</dbReference>
<dbReference type="GO" id="GO:0010838">
    <property type="term" value="P:positive regulation of keratinocyte proliferation"/>
    <property type="evidence" value="ECO:0000250"/>
    <property type="project" value="UniProtKB"/>
</dbReference>
<dbReference type="FunFam" id="2.60.40.10:FF:000090">
    <property type="entry name" value="Protein-glutamine gamma-glutamyltransferase 2"/>
    <property type="match status" value="1"/>
</dbReference>
<dbReference type="FunFam" id="3.90.260.10:FF:000001">
    <property type="entry name" value="Protein-glutamine gamma-glutamyltransferase 2"/>
    <property type="match status" value="1"/>
</dbReference>
<dbReference type="FunFam" id="2.60.40.10:FF:000171">
    <property type="entry name" value="protein-glutamine gamma-glutamyltransferase 6"/>
    <property type="match status" value="1"/>
</dbReference>
<dbReference type="FunFam" id="2.60.40.10:FF:001143">
    <property type="entry name" value="Protein-glutamine gamma-glutamyltransferase K"/>
    <property type="match status" value="1"/>
</dbReference>
<dbReference type="Gene3D" id="2.60.40.10">
    <property type="entry name" value="Immunoglobulins"/>
    <property type="match status" value="3"/>
</dbReference>
<dbReference type="Gene3D" id="3.90.260.10">
    <property type="entry name" value="Transglutaminase-like"/>
    <property type="match status" value="1"/>
</dbReference>
<dbReference type="InterPro" id="IPR013783">
    <property type="entry name" value="Ig-like_fold"/>
</dbReference>
<dbReference type="InterPro" id="IPR014756">
    <property type="entry name" value="Ig_E-set"/>
</dbReference>
<dbReference type="InterPro" id="IPR038765">
    <property type="entry name" value="Papain-like_cys_pep_sf"/>
</dbReference>
<dbReference type="InterPro" id="IPR050779">
    <property type="entry name" value="Transglutaminase"/>
</dbReference>
<dbReference type="InterPro" id="IPR002931">
    <property type="entry name" value="Transglutaminase-like"/>
</dbReference>
<dbReference type="InterPro" id="IPR036985">
    <property type="entry name" value="Transglutaminase-like_sf"/>
</dbReference>
<dbReference type="InterPro" id="IPR023608">
    <property type="entry name" value="Transglutaminase_animal"/>
</dbReference>
<dbReference type="InterPro" id="IPR013808">
    <property type="entry name" value="Transglutaminase_AS"/>
</dbReference>
<dbReference type="InterPro" id="IPR008958">
    <property type="entry name" value="Transglutaminase_C"/>
</dbReference>
<dbReference type="InterPro" id="IPR036238">
    <property type="entry name" value="Transglutaminase_C_sf"/>
</dbReference>
<dbReference type="InterPro" id="IPR001102">
    <property type="entry name" value="Transglutaminase_N"/>
</dbReference>
<dbReference type="PANTHER" id="PTHR11590">
    <property type="entry name" value="PROTEIN-GLUTAMINE GAMMA-GLUTAMYLTRANSFERASE"/>
    <property type="match status" value="1"/>
</dbReference>
<dbReference type="PANTHER" id="PTHR11590:SF49">
    <property type="entry name" value="PROTEIN-GLUTAMINE GAMMA-GLUTAMYLTRANSFERASE K"/>
    <property type="match status" value="1"/>
</dbReference>
<dbReference type="Pfam" id="PF00927">
    <property type="entry name" value="Transglut_C"/>
    <property type="match status" value="2"/>
</dbReference>
<dbReference type="Pfam" id="PF01841">
    <property type="entry name" value="Transglut_core"/>
    <property type="match status" value="1"/>
</dbReference>
<dbReference type="Pfam" id="PF00868">
    <property type="entry name" value="Transglut_N"/>
    <property type="match status" value="1"/>
</dbReference>
<dbReference type="PIRSF" id="PIRSF000459">
    <property type="entry name" value="TGM_EBP42"/>
    <property type="match status" value="1"/>
</dbReference>
<dbReference type="SMART" id="SM00460">
    <property type="entry name" value="TGc"/>
    <property type="match status" value="1"/>
</dbReference>
<dbReference type="SUPFAM" id="SSF54001">
    <property type="entry name" value="Cysteine proteinases"/>
    <property type="match status" value="1"/>
</dbReference>
<dbReference type="SUPFAM" id="SSF81296">
    <property type="entry name" value="E set domains"/>
    <property type="match status" value="1"/>
</dbReference>
<dbReference type="SUPFAM" id="SSF49309">
    <property type="entry name" value="Transglutaminase, two C-terminal domains"/>
    <property type="match status" value="2"/>
</dbReference>
<dbReference type="PROSITE" id="PS00547">
    <property type="entry name" value="TRANSGLUTAMINASES"/>
    <property type="match status" value="1"/>
</dbReference>
<gene>
    <name type="primary">TGM1</name>
</gene>
<feature type="chain" id="PRO_0000213703" description="Protein-glutamine gamma-glutamyltransferase K">
    <location>
        <begin position="1"/>
        <end position="836"/>
    </location>
</feature>
<feature type="region of interest" description="Disordered" evidence="6">
    <location>
        <begin position="1"/>
        <end position="68"/>
    </location>
</feature>
<feature type="region of interest" description="Disordered" evidence="6">
    <location>
        <begin position="89"/>
        <end position="125"/>
    </location>
</feature>
<feature type="compositionally biased region" description="Basic and acidic residues" evidence="6">
    <location>
        <begin position="1"/>
        <end position="33"/>
    </location>
</feature>
<feature type="compositionally biased region" description="Basic and acidic residues" evidence="6">
    <location>
        <begin position="89"/>
        <end position="112"/>
    </location>
</feature>
<feature type="active site" evidence="5">
    <location>
        <position position="397"/>
    </location>
</feature>
<feature type="active site" evidence="5">
    <location>
        <position position="456"/>
    </location>
</feature>
<feature type="active site" evidence="5">
    <location>
        <position position="479"/>
    </location>
</feature>
<feature type="binding site" evidence="1">
    <location>
        <position position="519"/>
    </location>
    <ligand>
        <name>Ca(2+)</name>
        <dbReference type="ChEBI" id="CHEBI:29108"/>
    </ligand>
</feature>
<feature type="binding site" evidence="1">
    <location>
        <position position="521"/>
    </location>
    <ligand>
        <name>Ca(2+)</name>
        <dbReference type="ChEBI" id="CHEBI:29108"/>
    </ligand>
</feature>
<feature type="binding site" evidence="1">
    <location>
        <position position="568"/>
    </location>
    <ligand>
        <name>Ca(2+)</name>
        <dbReference type="ChEBI" id="CHEBI:29108"/>
    </ligand>
</feature>
<feature type="binding site" evidence="1">
    <location>
        <position position="573"/>
    </location>
    <ligand>
        <name>Ca(2+)</name>
        <dbReference type="ChEBI" id="CHEBI:29108"/>
    </ligand>
</feature>
<feature type="modified residue" description="Phosphothreonine" evidence="4">
    <location>
        <position position="46"/>
    </location>
</feature>
<feature type="modified residue" description="Phosphoserine" evidence="2">
    <location>
        <position position="48"/>
    </location>
</feature>
<feature type="modified residue" description="Phosphoserine" evidence="3">
    <location>
        <position position="98"/>
    </location>
</feature>
<feature type="modified residue" description="Phosphoserine" evidence="2">
    <location>
        <position position="112"/>
    </location>
</feature>
<feature type="modified residue" description="Phosphoserine" evidence="4">
    <location>
        <position position="824"/>
    </location>
</feature>
<comment type="function">
    <text evidence="2">Catalyzes the cross-linking of proteins and the conjugation of polyamines to proteins. Responsible for cross-linking epidermal proteins during formation of the stratum corneum. Involved in cell proliferation (By similarity).</text>
</comment>
<comment type="catalytic activity">
    <reaction evidence="5">
        <text>L-glutaminyl-[protein] + L-lysyl-[protein] = [protein]-L-lysyl-N(6)-5-L-glutamyl-[protein] + NH4(+)</text>
        <dbReference type="Rhea" id="RHEA:54816"/>
        <dbReference type="Rhea" id="RHEA-COMP:9752"/>
        <dbReference type="Rhea" id="RHEA-COMP:10207"/>
        <dbReference type="Rhea" id="RHEA-COMP:14005"/>
        <dbReference type="ChEBI" id="CHEBI:28938"/>
        <dbReference type="ChEBI" id="CHEBI:29969"/>
        <dbReference type="ChEBI" id="CHEBI:30011"/>
        <dbReference type="ChEBI" id="CHEBI:138370"/>
        <dbReference type="EC" id="2.3.2.13"/>
    </reaction>
</comment>
<comment type="cofactor">
    <cofactor evidence="1">
        <name>Ca(2+)</name>
        <dbReference type="ChEBI" id="CHEBI:29108"/>
    </cofactor>
    <text evidence="1">Binds 1 Ca(2+) ion per subunit.</text>
</comment>
<comment type="activity regulation">
    <text>Inhibited by retinoic acid, but phorbol ester treatment activates it.</text>
</comment>
<comment type="subunit">
    <text evidence="2">Interacts with PLAAT4.</text>
</comment>
<comment type="subcellular location">
    <subcellularLocation>
        <location evidence="2">Membrane</location>
        <topology evidence="2">Lipid-anchor</topology>
    </subcellularLocation>
</comment>
<comment type="PTM">
    <text evidence="2">Palmitoylated.</text>
</comment>
<comment type="PTM">
    <text evidence="2">The membrane anchorage region possesses a cluster of five cysteines within which fatty acid(s) may become thioester-linked. It is subject to phorbol ester-stimulated phosphorylation and is hypersensitive to proteolysis, which releases the enzyme in a soluble form.</text>
</comment>
<comment type="PTM">
    <text evidence="4">Tyrosine-phosphorylated.</text>
</comment>
<comment type="similarity">
    <text evidence="7">Belongs to the transglutaminase superfamily. Transglutaminase family.</text>
</comment>
<organism>
    <name type="scientific">Oryctolagus cuniculus</name>
    <name type="common">Rabbit</name>
    <dbReference type="NCBI Taxonomy" id="9986"/>
    <lineage>
        <taxon>Eukaryota</taxon>
        <taxon>Metazoa</taxon>
        <taxon>Chordata</taxon>
        <taxon>Craniata</taxon>
        <taxon>Vertebrata</taxon>
        <taxon>Euteleostomi</taxon>
        <taxon>Mammalia</taxon>
        <taxon>Eutheria</taxon>
        <taxon>Euarchontoglires</taxon>
        <taxon>Glires</taxon>
        <taxon>Lagomorpha</taxon>
        <taxon>Leporidae</taxon>
        <taxon>Oryctolagus</taxon>
    </lineage>
</organism>
<protein>
    <recommendedName>
        <fullName>Protein-glutamine gamma-glutamyltransferase K</fullName>
        <ecNumber>2.3.2.13</ecNumber>
    </recommendedName>
    <alternativeName>
        <fullName>Epidermal TGase</fullName>
    </alternativeName>
    <alternativeName>
        <fullName>Transglutaminase K</fullName>
        <shortName>TG(K)</shortName>
        <shortName>TGK</shortName>
        <shortName>TGase K</shortName>
    </alternativeName>
    <alternativeName>
        <fullName>Transglutaminase-1</fullName>
        <shortName>TGase-1</shortName>
    </alternativeName>
</protein>
<reference key="1">
    <citation type="journal article" date="1993" name="Mol. Endocrinol.">
        <title>Regulation of transglutaminase type I expression in squamous differentiating rabbit tracheal epithelial cells and human epidermal keratinocytes: effects of retinoic acid and phorbol esters.</title>
        <authorList>
            <person name="Saunders N.A."/>
            <person name="Bernacki S.H."/>
            <person name="Vollberg T.M."/>
            <person name="Jetten A.M."/>
        </authorList>
    </citation>
    <scope>NUCLEOTIDE SEQUENCE [MRNA]</scope>
    <source>
        <strain>New Zealand white</strain>
        <tissue>Tracheobronchial epithelium</tissue>
    </source>
</reference>
<reference key="2">
    <citation type="journal article" date="1989" name="Mol. Cell. Biol.">
        <title>Regulation of type I (epidermal) transglutaminase mRNA levels during squamous differentiation: down regulation by retinoids.</title>
        <authorList>
            <person name="Floyd E.E."/>
            <person name="Jetten A.M."/>
        </authorList>
    </citation>
    <scope>NUCLEOTIDE SEQUENCE [MRNA] OF 368-749</scope>
</reference>
<reference key="3">
    <citation type="journal article" date="1991" name="J. Biol. Chem.">
        <title>The complete amino acid sequence of the human transglutaminase K enzyme deduced from the nucleic acid sequences of cDNA clones.</title>
        <authorList>
            <person name="Kim H.C."/>
            <person name="Idler W.W."/>
            <person name="Kim I.-G."/>
            <person name="Han J.H."/>
            <person name="Chung S.-I."/>
            <person name="Steinert P.M."/>
        </authorList>
    </citation>
    <scope>SEQUENCE REVISION</scope>
</reference>
<keyword id="KW-0012">Acyltransferase</keyword>
<keyword id="KW-0106">Calcium</keyword>
<keyword id="KW-0417">Keratinization</keyword>
<keyword id="KW-0449">Lipoprotein</keyword>
<keyword id="KW-0472">Membrane</keyword>
<keyword id="KW-0479">Metal-binding</keyword>
<keyword id="KW-0564">Palmitate</keyword>
<keyword id="KW-0597">Phosphoprotein</keyword>
<keyword id="KW-1185">Reference proteome</keyword>
<keyword id="KW-0808">Transferase</keyword>
<sequence>MDGPRSDMGRSDVSRSDMSRSDMGRSDMGRSDVGRCGGGPLQPSATPSPEPEPEPEPEPDRGSRSRGGRGRSFWARCCGCCSCRNAADDDWGREPSDSRDRGSSSRGGRPDSRGGGVNAAGDGTIREGMLVVTGVDLLSSRSDQNRREHHTDEFEYEELIVRRGQPFHLVLFLSRPYESSDRIALELQIGNNPEVGKGTHVIIPVGKGNSGGWKAQVTKASGQTLNLRVHSPASAIIGKFQFTVRTRTEAGEFQLPFDPRNEIYILFNPWCPEDIVYVDHEDWRQDYVLNESGRIYYGTEAQIGERTWNYGQFDHGVLDACLYILDRRGMPYGGRGDPVSVSRVISAMVNSLDDNGVLIGNWSGDYSRGTNPSAWVGSVEILLSYLRTGYSVPYGQCWVFAGVTTTVLRCLGLATRTVTNFNSAHDTDTSLTMDIYFDENMKPLEHLNRDSVWNFHVWNDCWMKRPDLPSGFDGWQVVDATPQETSSGIFCCGPCSVESVKNGLVYMKYDTPFIFAEVNSDKVYWQRQDDGSFKIVYVEEKAIGTLIVTKAVRSHMREDITHIYKHPEGSDAERKAVETAAAHGSKPNVYDSRDSAEDVAMQVEAQDAVMGQDLTVSVVLTNRSSSRRTVKLHLYLSVTFYTGVTGSIFKESKKEVVLAAGSSDSVVMPVAYKEYRPHLVDQGAMLLNVSGHVKESGQVLAKQHTFRVRTPDLSLTLLGAAVVGQECEVQIVFRNPLPITLTNVVFRLEGSGLQRPKILNVGDIGGNETVTLRQTFVPVRPGPRQLIASLDSPQLSQVHGVIQVDVAPASGGRGFLHAGGDSYSGETIPMTSRGEA</sequence>
<name>TGM1_RABIT</name>
<evidence type="ECO:0000250" key="1"/>
<evidence type="ECO:0000250" key="2">
    <source>
        <dbReference type="UniProtKB" id="P22735"/>
    </source>
</evidence>
<evidence type="ECO:0000250" key="3">
    <source>
        <dbReference type="UniProtKB" id="P23606"/>
    </source>
</evidence>
<evidence type="ECO:0000250" key="4">
    <source>
        <dbReference type="UniProtKB" id="Q9JLF6"/>
    </source>
</evidence>
<evidence type="ECO:0000255" key="5">
    <source>
        <dbReference type="PROSITE-ProRule" id="PRU10024"/>
    </source>
</evidence>
<evidence type="ECO:0000256" key="6">
    <source>
        <dbReference type="SAM" id="MobiDB-lite"/>
    </source>
</evidence>
<evidence type="ECO:0000305" key="7"/>
<accession>P22758</accession>